<dbReference type="EC" id="2.1.1.45"/>
<dbReference type="EMBL" id="AH001329">
    <property type="protein sequence ID" value="AAA32492.1"/>
    <property type="molecule type" value="Genomic_DNA"/>
</dbReference>
<dbReference type="EMBL" id="AF158101">
    <property type="protein sequence ID" value="AAD42662.1"/>
    <property type="molecule type" value="Genomic_DNA"/>
</dbReference>
<dbReference type="EMBL" id="M12742">
    <property type="protein sequence ID" value="AAC12816.1"/>
    <property type="molecule type" value="Genomic_DNA"/>
</dbReference>
<dbReference type="EMBL" id="J03968">
    <property type="protein sequence ID" value="AAA32525.1"/>
    <property type="molecule type" value="Genomic_DNA"/>
</dbReference>
<dbReference type="PIR" id="A00550">
    <property type="entry name" value="SYBPT4"/>
</dbReference>
<dbReference type="RefSeq" id="NP_049848.1">
    <property type="nucleotide sequence ID" value="NC_000866.4"/>
</dbReference>
<dbReference type="PDB" id="1TIS">
    <property type="method" value="X-ray"/>
    <property type="resolution" value="2.70 A"/>
    <property type="chains" value="A=1-286"/>
</dbReference>
<dbReference type="PDBsum" id="1TIS"/>
<dbReference type="SMR" id="P00471"/>
<dbReference type="GeneID" id="1258770"/>
<dbReference type="KEGG" id="vg:1258770"/>
<dbReference type="OrthoDB" id="13491at10239"/>
<dbReference type="SABIO-RK" id="P00471"/>
<dbReference type="UniPathway" id="UPA00575"/>
<dbReference type="EvolutionaryTrace" id="P00471"/>
<dbReference type="Proteomes" id="UP000009087">
    <property type="component" value="Segment"/>
</dbReference>
<dbReference type="GO" id="GO:0004799">
    <property type="term" value="F:thymidylate synthase activity"/>
    <property type="evidence" value="ECO:0000315"/>
    <property type="project" value="CACAO"/>
</dbReference>
<dbReference type="GO" id="GO:0006231">
    <property type="term" value="P:dTMP biosynthetic process"/>
    <property type="evidence" value="ECO:0007669"/>
    <property type="project" value="InterPro"/>
</dbReference>
<dbReference type="GO" id="GO:0006235">
    <property type="term" value="P:dTTP biosynthetic process"/>
    <property type="evidence" value="ECO:0007669"/>
    <property type="project" value="UniProtKB-UniPathway"/>
</dbReference>
<dbReference type="GO" id="GO:0032259">
    <property type="term" value="P:methylation"/>
    <property type="evidence" value="ECO:0007669"/>
    <property type="project" value="UniProtKB-KW"/>
</dbReference>
<dbReference type="CDD" id="cd00351">
    <property type="entry name" value="TS_Pyrimidine_HMase"/>
    <property type="match status" value="1"/>
</dbReference>
<dbReference type="FunFam" id="3.30.572.10:FF:000009">
    <property type="entry name" value="Thymidylate synthase"/>
    <property type="match status" value="1"/>
</dbReference>
<dbReference type="Gene3D" id="3.30.572.10">
    <property type="entry name" value="Thymidylate synthase/dCMP hydroxymethylase domain"/>
    <property type="match status" value="1"/>
</dbReference>
<dbReference type="HAMAP" id="MF_00008">
    <property type="entry name" value="Thymidy_synth_bact"/>
    <property type="match status" value="1"/>
</dbReference>
<dbReference type="InterPro" id="IPR045097">
    <property type="entry name" value="Thymidate_synth/dCMP_Mease"/>
</dbReference>
<dbReference type="InterPro" id="IPR023451">
    <property type="entry name" value="Thymidate_synth/dCMP_Mease_dom"/>
</dbReference>
<dbReference type="InterPro" id="IPR036926">
    <property type="entry name" value="Thymidate_synth/dCMP_Mease_sf"/>
</dbReference>
<dbReference type="InterPro" id="IPR000398">
    <property type="entry name" value="Thymidylate_synthase"/>
</dbReference>
<dbReference type="InterPro" id="IPR020940">
    <property type="entry name" value="Thymidylate_synthase_AS"/>
</dbReference>
<dbReference type="NCBIfam" id="TIGR03284">
    <property type="entry name" value="thym_sym"/>
    <property type="match status" value="1"/>
</dbReference>
<dbReference type="PANTHER" id="PTHR11548">
    <property type="entry name" value="THYMIDYLATE SYNTHASE 1"/>
    <property type="match status" value="1"/>
</dbReference>
<dbReference type="PANTHER" id="PTHR11548:SF1">
    <property type="entry name" value="THYMIDYLATE SYNTHASE 1"/>
    <property type="match status" value="1"/>
</dbReference>
<dbReference type="Pfam" id="PF00303">
    <property type="entry name" value="Thymidylat_synt"/>
    <property type="match status" value="1"/>
</dbReference>
<dbReference type="PRINTS" id="PR00108">
    <property type="entry name" value="THYMDSNTHASE"/>
</dbReference>
<dbReference type="SUPFAM" id="SSF55831">
    <property type="entry name" value="Thymidylate synthase/dCMP hydroxymethylase"/>
    <property type="match status" value="1"/>
</dbReference>
<dbReference type="PROSITE" id="PS00091">
    <property type="entry name" value="THYMIDYLATE_SYNTHASE"/>
    <property type="match status" value="1"/>
</dbReference>
<accession>P00471</accession>
<organism>
    <name type="scientific">Enterobacteria phage T4</name>
    <name type="common">Bacteriophage T4</name>
    <dbReference type="NCBI Taxonomy" id="10665"/>
    <lineage>
        <taxon>Viruses</taxon>
        <taxon>Duplodnaviria</taxon>
        <taxon>Heunggongvirae</taxon>
        <taxon>Uroviricota</taxon>
        <taxon>Caudoviricetes</taxon>
        <taxon>Straboviridae</taxon>
        <taxon>Tevenvirinae</taxon>
        <taxon>Tequatrovirus</taxon>
    </lineage>
</organism>
<sequence>MKQYQDLIKDIFENGYETDDRTGTGTIALFGSKLRWDLTKGFPAVTTKKLAWKACIAELIWFLSGSTNVNDLRLIQHDSLIQGKTVWDENYENQAKDLGYHSGELGPIYGKQWRDFGGVDQIIEVIDRIKKLPNDRRQIVSAWNPAELKYMALPPCHMFYQFNVRNGYLDLQWYQRSVDVFLGLPFNIASYATLVHIVAKMCNLIPGDLIFSGGNTHIYMNHVEQCKEILRREPKELCELVISGLPYKFRYLSTKEQLKYVLKLRPKDFVLNNYVSHPPIKGKMAV</sequence>
<name>TYSY_BPT4</name>
<gene>
    <name type="primary">TD</name>
</gene>
<organismHost>
    <name type="scientific">Escherichia coli</name>
    <dbReference type="NCBI Taxonomy" id="562"/>
</organismHost>
<keyword id="KW-0002">3D-structure</keyword>
<keyword id="KW-0489">Methyltransferase</keyword>
<keyword id="KW-0545">Nucleotide biosynthesis</keyword>
<keyword id="KW-1185">Reference proteome</keyword>
<keyword id="KW-0808">Transferase</keyword>
<comment type="catalytic activity">
    <reaction>
        <text>dUMP + (6R)-5,10-methylene-5,6,7,8-tetrahydrofolate = 7,8-dihydrofolate + dTMP</text>
        <dbReference type="Rhea" id="RHEA:12104"/>
        <dbReference type="ChEBI" id="CHEBI:15636"/>
        <dbReference type="ChEBI" id="CHEBI:57451"/>
        <dbReference type="ChEBI" id="CHEBI:63528"/>
        <dbReference type="ChEBI" id="CHEBI:246422"/>
        <dbReference type="EC" id="2.1.1.45"/>
    </reaction>
</comment>
<comment type="pathway">
    <text>Pyrimidine metabolism; dTTP biosynthesis.</text>
</comment>
<comment type="subunit">
    <text>Homodimer.</text>
</comment>
<comment type="miscellaneous">
    <text>This enzyme is also expressed by the thyA gene of E.coli; the phage and host synthases exhibit striking dissimilarities in both structure and function.</text>
</comment>
<comment type="similarity">
    <text evidence="2">Belongs to the thymidylate synthase family.</text>
</comment>
<evidence type="ECO:0000250" key="1">
    <source>
        <dbReference type="UniProtKB" id="P0A884"/>
    </source>
</evidence>
<evidence type="ECO:0000305" key="2"/>
<evidence type="ECO:0007829" key="3">
    <source>
        <dbReference type="PDB" id="1TIS"/>
    </source>
</evidence>
<proteinExistence type="evidence at protein level"/>
<protein>
    <recommendedName>
        <fullName>Thymidylate synthase</fullName>
        <shortName>TS</shortName>
        <shortName>TSase</shortName>
        <ecNumber>2.1.1.45</ecNumber>
    </recommendedName>
</protein>
<feature type="chain" id="PRO_0000141061" description="Thymidylate synthase">
    <location>
        <begin position="1"/>
        <end position="286"/>
    </location>
</feature>
<feature type="active site" description="Nucleophile" evidence="1">
    <location>
        <position position="156"/>
    </location>
</feature>
<feature type="binding site" description="in other chain" evidence="1">
    <location>
        <position position="21"/>
    </location>
    <ligand>
        <name>dUMP</name>
        <dbReference type="ChEBI" id="CHEBI:246422"/>
        <note>ligand shared between dimeric partners</note>
    </ligand>
</feature>
<feature type="binding site" evidence="1">
    <location>
        <begin position="136"/>
        <end position="137"/>
    </location>
    <ligand>
        <name>dUMP</name>
        <dbReference type="ChEBI" id="CHEBI:246422"/>
        <note>ligand shared between dimeric partners</note>
    </ligand>
</feature>
<feature type="binding site" description="in other chain" evidence="1">
    <location>
        <begin position="176"/>
        <end position="179"/>
    </location>
    <ligand>
        <name>dUMP</name>
        <dbReference type="ChEBI" id="CHEBI:246422"/>
        <note>ligand shared between dimeric partners</note>
    </ligand>
</feature>
<feature type="binding site" evidence="1">
    <location>
        <position position="179"/>
    </location>
    <ligand>
        <name>(6R)-5,10-methylene-5,6,7,8-tetrahydrofolate</name>
        <dbReference type="ChEBI" id="CHEBI:15636"/>
    </ligand>
</feature>
<feature type="binding site" description="in other chain" evidence="1">
    <location>
        <position position="187"/>
    </location>
    <ligand>
        <name>dUMP</name>
        <dbReference type="ChEBI" id="CHEBI:246422"/>
        <note>ligand shared between dimeric partners</note>
    </ligand>
</feature>
<feature type="binding site" description="in other chain" evidence="1">
    <location>
        <begin position="217"/>
        <end position="219"/>
    </location>
    <ligand>
        <name>dUMP</name>
        <dbReference type="ChEBI" id="CHEBI:246422"/>
        <note>ligand shared between dimeric partners</note>
    </ligand>
</feature>
<feature type="binding site" evidence="1">
    <location>
        <position position="285"/>
    </location>
    <ligand>
        <name>(6R)-5,10-methylene-5,6,7,8-tetrahydrofolate</name>
        <dbReference type="ChEBI" id="CHEBI:15636"/>
    </ligand>
</feature>
<feature type="helix" evidence="3">
    <location>
        <begin position="3"/>
        <end position="12"/>
    </location>
</feature>
<feature type="strand" evidence="3">
    <location>
        <begin position="26"/>
        <end position="30"/>
    </location>
</feature>
<feature type="strand" evidence="3">
    <location>
        <begin position="33"/>
        <end position="37"/>
    </location>
</feature>
<feature type="helix" evidence="3">
    <location>
        <begin position="38"/>
        <end position="40"/>
    </location>
</feature>
<feature type="helix" evidence="3">
    <location>
        <begin position="53"/>
        <end position="63"/>
    </location>
</feature>
<feature type="helix" evidence="3">
    <location>
        <begin position="69"/>
        <end position="77"/>
    </location>
</feature>
<feature type="strand" evidence="3">
    <location>
        <begin position="80"/>
        <end position="83"/>
    </location>
</feature>
<feature type="helix" evidence="3">
    <location>
        <begin position="88"/>
        <end position="91"/>
    </location>
</feature>
<feature type="turn" evidence="3">
    <location>
        <begin position="92"/>
        <end position="95"/>
    </location>
</feature>
<feature type="helix" evidence="3">
    <location>
        <begin position="96"/>
        <end position="98"/>
    </location>
</feature>
<feature type="helix" evidence="3">
    <location>
        <begin position="109"/>
        <end position="114"/>
    </location>
</feature>
<feature type="helix" evidence="3">
    <location>
        <begin position="121"/>
        <end position="131"/>
    </location>
</feature>
<feature type="helix" evidence="3">
    <location>
        <begin position="145"/>
        <end position="150"/>
    </location>
</feature>
<feature type="strand" evidence="3">
    <location>
        <begin position="156"/>
        <end position="164"/>
    </location>
</feature>
<feature type="strand" evidence="3">
    <location>
        <begin position="166"/>
        <end position="179"/>
    </location>
</feature>
<feature type="turn" evidence="3">
    <location>
        <begin position="180"/>
        <end position="183"/>
    </location>
</feature>
<feature type="helix" evidence="3">
    <location>
        <begin position="184"/>
        <end position="202"/>
    </location>
</feature>
<feature type="strand" evidence="3">
    <location>
        <begin position="205"/>
        <end position="221"/>
    </location>
</feature>
<feature type="turn" evidence="3">
    <location>
        <begin position="224"/>
        <end position="226"/>
    </location>
</feature>
<feature type="helix" evidence="3">
    <location>
        <begin position="227"/>
        <end position="229"/>
    </location>
</feature>
<feature type="helix" evidence="3">
    <location>
        <begin position="247"/>
        <end position="251"/>
    </location>
</feature>
<feature type="helix" evidence="3">
    <location>
        <begin position="254"/>
        <end position="262"/>
    </location>
</feature>
<feature type="helix" evidence="3">
    <location>
        <begin position="266"/>
        <end position="268"/>
    </location>
</feature>
<reference key="1">
    <citation type="journal article" date="1984" name="Proc. Natl. Acad. Sci. U.S.A.">
        <title>Intervening sequence in the thymidylate synthase gene of bacteriophage T4.</title>
        <authorList>
            <person name="Chu F.K."/>
            <person name="Maley G.F."/>
            <person name="Maley F."/>
            <person name="Belfort M."/>
        </authorList>
    </citation>
    <scope>NUCLEOTIDE SEQUENCE [GENOMIC DNA]</scope>
</reference>
<reference key="2">
    <citation type="journal article" date="2003" name="Microbiol. Mol. Biol. Rev.">
        <title>Bacteriophage T4 genome.</title>
        <authorList>
            <person name="Miller E.S."/>
            <person name="Kutter E."/>
            <person name="Mosig G."/>
            <person name="Arisaka F."/>
            <person name="Kunisawa T."/>
            <person name="Ruger W."/>
        </authorList>
    </citation>
    <scope>NUCLEOTIDE SEQUENCE [LARGE SCALE GENOMIC DNA]</scope>
</reference>
<reference key="3">
    <citation type="journal article" date="1984" name="J. Biol. Chem.">
        <title>Nucleotide sequence reveals overlap between T4 phage genes encoding dihydrofolate reductase and thymidylate synthase.</title>
        <authorList>
            <person name="Purohit S."/>
            <person name="Mathews C.K."/>
        </authorList>
    </citation>
    <scope>NUCLEOTIDE SEQUENCE [GENOMIC DNA] OF 1-42</scope>
</reference>
<reference key="4">
    <citation type="journal article" date="1986" name="Cell">
        <title>Characterization of the intron in the phage T4 thymidylate synthase gene and evidence for its self-excision from the primary transcript.</title>
        <authorList>
            <person name="Chu F.K."/>
            <person name="Maley G.F."/>
            <person name="West D.K."/>
            <person name="Belfort M."/>
            <person name="Maley F."/>
        </authorList>
    </citation>
    <scope>NUCLEOTIDE SEQUENCE [GENOMIC DNA] OF 179-188</scope>
</reference>
<reference key="5">
    <citation type="journal article" date="1988" name="J. Biol. Chem.">
        <title>Total sequence, flanking regions, and transcripts of bacteriophage T4 nrdA gene, coding for alpha chain of ribonucleoside diphosphate reductase.</title>
        <authorList>
            <person name="Tseng M.J."/>
            <person name="Hilfinger J.M."/>
            <person name="Walsh A."/>
            <person name="Greenberg G.R."/>
        </authorList>
    </citation>
    <scope>NUCLEOTIDE SEQUENCE [GENOMIC DNA] OF 251-286</scope>
</reference>
<reference key="6">
    <citation type="journal article" date="1994" name="Biochemistry">
        <title>Crystal structure of thymidylate synthase from T4 phage: component of a deoxynucleoside triphosphate-synthesizing complex.</title>
        <authorList>
            <person name="Finer-Moore J.S."/>
            <person name="Maley G.F."/>
            <person name="Maley F."/>
            <person name="Montfort W.R."/>
            <person name="Stroud R.M."/>
        </authorList>
    </citation>
    <scope>X-RAY CRYSTALLOGRAPHY (3.1 ANGSTROMS)</scope>
</reference>